<comment type="function">
    <text evidence="1">Part of the AP-3 complex, an adaptor-related complex which is not clathrin-associated. The complex is associated with the Golgi region as well as more peripheral structures. It facilitates the budding of vesicles from the Golgi membrane and may be directly involved in trafficking to the vacuole (By similarity).</text>
</comment>
<comment type="subunit">
    <text evidence="1">Adaptor protein complex 3 (AP-3) is a heterotetramer composed of 2 large adaptins (APL5 and APL6), a medium adaptin (APM3) and a small adaptin (APS3).</text>
</comment>
<comment type="subcellular location">
    <subcellularLocation>
        <location evidence="2">Golgi apparatus</location>
    </subcellularLocation>
    <subcellularLocation>
        <location evidence="2">Cytoplasmic vesicle membrane</location>
        <topology evidence="2">Peripheral membrane protein</topology>
        <orientation evidence="2">Cytoplasmic side</orientation>
    </subcellularLocation>
    <text evidence="2">Component of the coat surrounding the cytoplasmic face of coated vesicles located at the Golgi complex.</text>
</comment>
<comment type="similarity">
    <text evidence="3">Belongs to the adaptor complexes small subunit family.</text>
</comment>
<evidence type="ECO:0000250" key="1"/>
<evidence type="ECO:0000250" key="2">
    <source>
        <dbReference type="UniProtKB" id="P47064"/>
    </source>
</evidence>
<evidence type="ECO:0000305" key="3"/>
<accession>Q75F71</accession>
<gene>
    <name type="primary">APS3</name>
    <name type="ordered locus">AAL143W</name>
</gene>
<reference key="1">
    <citation type="journal article" date="2004" name="Science">
        <title>The Ashbya gossypii genome as a tool for mapping the ancient Saccharomyces cerevisiae genome.</title>
        <authorList>
            <person name="Dietrich F.S."/>
            <person name="Voegeli S."/>
            <person name="Brachat S."/>
            <person name="Lerch A."/>
            <person name="Gates K."/>
            <person name="Steiner S."/>
            <person name="Mohr C."/>
            <person name="Poehlmann R."/>
            <person name="Luedi P."/>
            <person name="Choi S."/>
            <person name="Wing R.A."/>
            <person name="Flavier A."/>
            <person name="Gaffney T.D."/>
            <person name="Philippsen P."/>
        </authorList>
    </citation>
    <scope>NUCLEOTIDE SEQUENCE [LARGE SCALE GENOMIC DNA]</scope>
    <source>
        <strain>ATCC 10895 / CBS 109.51 / FGSC 9923 / NRRL Y-1056</strain>
    </source>
</reference>
<reference key="2">
    <citation type="journal article" date="2013" name="G3 (Bethesda)">
        <title>Genomes of Ashbya fungi isolated from insects reveal four mating-type loci, numerous translocations, lack of transposons, and distinct gene duplications.</title>
        <authorList>
            <person name="Dietrich F.S."/>
            <person name="Voegeli S."/>
            <person name="Kuo S."/>
            <person name="Philippsen P."/>
        </authorList>
    </citation>
    <scope>GENOME REANNOTATION</scope>
    <source>
        <strain>ATCC 10895 / CBS 109.51 / FGSC 9923 / NRRL Y-1056</strain>
    </source>
</reference>
<proteinExistence type="inferred from homology"/>
<protein>
    <recommendedName>
        <fullName>AP-3 complex subunit sigma</fullName>
    </recommendedName>
    <alternativeName>
        <fullName>AP-3 complex sigma3A subunit</fullName>
    </alternativeName>
    <alternativeName>
        <fullName>Adaptor-related protein complex 3 subunit sigma</fullName>
    </alternativeName>
    <alternativeName>
        <fullName>Clathrin-associated/assembly/adaptor protein, small 3</fullName>
    </alternativeName>
    <alternativeName>
        <fullName>Sigma-adaptin 3A</fullName>
    </alternativeName>
    <alternativeName>
        <fullName>Sigma3-adaptin</fullName>
    </alternativeName>
</protein>
<organism>
    <name type="scientific">Eremothecium gossypii (strain ATCC 10895 / CBS 109.51 / FGSC 9923 / NRRL Y-1056)</name>
    <name type="common">Yeast</name>
    <name type="synonym">Ashbya gossypii</name>
    <dbReference type="NCBI Taxonomy" id="284811"/>
    <lineage>
        <taxon>Eukaryota</taxon>
        <taxon>Fungi</taxon>
        <taxon>Dikarya</taxon>
        <taxon>Ascomycota</taxon>
        <taxon>Saccharomycotina</taxon>
        <taxon>Saccharomycetes</taxon>
        <taxon>Saccharomycetales</taxon>
        <taxon>Saccharomycetaceae</taxon>
        <taxon>Eremothecium</taxon>
    </lineage>
</organism>
<name>AP3S_EREGS</name>
<feature type="chain" id="PRO_0000227679" description="AP-3 complex subunit sigma">
    <location>
        <begin position="1"/>
        <end position="185"/>
    </location>
</feature>
<sequence length="185" mass="21048">MIHAVLIFNKKCQPRLVKYYTPVDLPKQKLLLEQVYELISQRNSSIQSSFLITPPSLLSSGSETINEDIQIIYKNYATLYFTFIVDDQESELAILDLIQTFVEALDRCFAEVNELDLIFNWQTLESVLEEIIQGGMVIETNVKKIVETVDELNRTSNQEARFGNGLGNAFQAITMGGFSNWGARQ</sequence>
<dbReference type="EMBL" id="AE016814">
    <property type="protein sequence ID" value="AAS50223.1"/>
    <property type="molecule type" value="Genomic_DNA"/>
</dbReference>
<dbReference type="RefSeq" id="NP_982399.1">
    <property type="nucleotide sequence ID" value="NM_207752.1"/>
</dbReference>
<dbReference type="SMR" id="Q75F71"/>
<dbReference type="FunCoup" id="Q75F71">
    <property type="interactions" value="432"/>
</dbReference>
<dbReference type="STRING" id="284811.Q75F71"/>
<dbReference type="EnsemblFungi" id="AAS50223">
    <property type="protein sequence ID" value="AAS50223"/>
    <property type="gene ID" value="AGOS_AAL143W"/>
</dbReference>
<dbReference type="GeneID" id="4618593"/>
<dbReference type="KEGG" id="ago:AGOS_AAL143W"/>
<dbReference type="eggNOG" id="KOG0936">
    <property type="taxonomic scope" value="Eukaryota"/>
</dbReference>
<dbReference type="HOGENOM" id="CLU_061221_2_2_1"/>
<dbReference type="InParanoid" id="Q75F71"/>
<dbReference type="OMA" id="DLIFNWQ"/>
<dbReference type="OrthoDB" id="10261046at2759"/>
<dbReference type="Proteomes" id="UP000000591">
    <property type="component" value="Chromosome I"/>
</dbReference>
<dbReference type="GO" id="GO:0030123">
    <property type="term" value="C:AP-3 adaptor complex"/>
    <property type="evidence" value="ECO:0007669"/>
    <property type="project" value="EnsemblFungi"/>
</dbReference>
<dbReference type="GO" id="GO:0030659">
    <property type="term" value="C:cytoplasmic vesicle membrane"/>
    <property type="evidence" value="ECO:0007669"/>
    <property type="project" value="UniProtKB-SubCell"/>
</dbReference>
<dbReference type="GO" id="GO:0005794">
    <property type="term" value="C:Golgi apparatus"/>
    <property type="evidence" value="ECO:0007669"/>
    <property type="project" value="UniProtKB-SubCell"/>
</dbReference>
<dbReference type="GO" id="GO:0043231">
    <property type="term" value="C:intracellular membrane-bounded organelle"/>
    <property type="evidence" value="ECO:0000318"/>
    <property type="project" value="GO_Central"/>
</dbReference>
<dbReference type="GO" id="GO:0006896">
    <property type="term" value="P:Golgi to vacuole transport"/>
    <property type="evidence" value="ECO:0007669"/>
    <property type="project" value="EnsemblFungi"/>
</dbReference>
<dbReference type="GO" id="GO:0006623">
    <property type="term" value="P:protein targeting to vacuole"/>
    <property type="evidence" value="ECO:0007669"/>
    <property type="project" value="EnsemblFungi"/>
</dbReference>
<dbReference type="GO" id="GO:0016192">
    <property type="term" value="P:vesicle-mediated transport"/>
    <property type="evidence" value="ECO:0000318"/>
    <property type="project" value="GO_Central"/>
</dbReference>
<dbReference type="FunFam" id="3.30.450.60:FF:000001">
    <property type="entry name" value="AP complex subunit sigma"/>
    <property type="match status" value="1"/>
</dbReference>
<dbReference type="Gene3D" id="3.30.450.60">
    <property type="match status" value="1"/>
</dbReference>
<dbReference type="InterPro" id="IPR016635">
    <property type="entry name" value="AP_complex_ssu"/>
</dbReference>
<dbReference type="InterPro" id="IPR022775">
    <property type="entry name" value="AP_mu_sigma_su"/>
</dbReference>
<dbReference type="InterPro" id="IPR000804">
    <property type="entry name" value="Clathrin_sm-chain_CS"/>
</dbReference>
<dbReference type="InterPro" id="IPR011012">
    <property type="entry name" value="Longin-like_dom_sf"/>
</dbReference>
<dbReference type="PANTHER" id="PTHR11753">
    <property type="entry name" value="ADAPTOR COMPLEXES SMALL SUBUNIT FAMILY"/>
    <property type="match status" value="1"/>
</dbReference>
<dbReference type="Pfam" id="PF01217">
    <property type="entry name" value="Clat_adaptor_s"/>
    <property type="match status" value="1"/>
</dbReference>
<dbReference type="PIRSF" id="PIRSF015588">
    <property type="entry name" value="AP_complex_sigma"/>
    <property type="match status" value="1"/>
</dbReference>
<dbReference type="SUPFAM" id="SSF64356">
    <property type="entry name" value="SNARE-like"/>
    <property type="match status" value="1"/>
</dbReference>
<dbReference type="PROSITE" id="PS00989">
    <property type="entry name" value="CLAT_ADAPTOR_S"/>
    <property type="match status" value="1"/>
</dbReference>
<keyword id="KW-0968">Cytoplasmic vesicle</keyword>
<keyword id="KW-0333">Golgi apparatus</keyword>
<keyword id="KW-0472">Membrane</keyword>
<keyword id="KW-0653">Protein transport</keyword>
<keyword id="KW-1185">Reference proteome</keyword>
<keyword id="KW-0813">Transport</keyword>